<organism>
    <name type="scientific">Streptococcus pneumoniae (strain Hungary19A-6)</name>
    <dbReference type="NCBI Taxonomy" id="487214"/>
    <lineage>
        <taxon>Bacteria</taxon>
        <taxon>Bacillati</taxon>
        <taxon>Bacillota</taxon>
        <taxon>Bacilli</taxon>
        <taxon>Lactobacillales</taxon>
        <taxon>Streptococcaceae</taxon>
        <taxon>Streptococcus</taxon>
    </lineage>
</organism>
<accession>B1ICV9</accession>
<name>RS18_STRPI</name>
<protein>
    <recommendedName>
        <fullName evidence="1">Small ribosomal subunit protein bS18</fullName>
    </recommendedName>
    <alternativeName>
        <fullName evidence="2">30S ribosomal protein S18</fullName>
    </alternativeName>
</protein>
<proteinExistence type="inferred from homology"/>
<dbReference type="EMBL" id="CP000936">
    <property type="protein sequence ID" value="ACA35634.1"/>
    <property type="molecule type" value="Genomic_DNA"/>
</dbReference>
<dbReference type="RefSeq" id="WP_000068664.1">
    <property type="nucleotide sequence ID" value="NC_010380.1"/>
</dbReference>
<dbReference type="SMR" id="B1ICV9"/>
<dbReference type="GeneID" id="93963800"/>
<dbReference type="KEGG" id="spv:SPH_1653"/>
<dbReference type="HOGENOM" id="CLU_148710_2_2_9"/>
<dbReference type="Proteomes" id="UP000002163">
    <property type="component" value="Chromosome"/>
</dbReference>
<dbReference type="GO" id="GO:0022627">
    <property type="term" value="C:cytosolic small ribosomal subunit"/>
    <property type="evidence" value="ECO:0007669"/>
    <property type="project" value="TreeGrafter"/>
</dbReference>
<dbReference type="GO" id="GO:0070181">
    <property type="term" value="F:small ribosomal subunit rRNA binding"/>
    <property type="evidence" value="ECO:0007669"/>
    <property type="project" value="TreeGrafter"/>
</dbReference>
<dbReference type="GO" id="GO:0003735">
    <property type="term" value="F:structural constituent of ribosome"/>
    <property type="evidence" value="ECO:0007669"/>
    <property type="project" value="InterPro"/>
</dbReference>
<dbReference type="GO" id="GO:0006412">
    <property type="term" value="P:translation"/>
    <property type="evidence" value="ECO:0007669"/>
    <property type="project" value="UniProtKB-UniRule"/>
</dbReference>
<dbReference type="FunFam" id="4.10.640.10:FF:000003">
    <property type="entry name" value="30S ribosomal protein S18"/>
    <property type="match status" value="1"/>
</dbReference>
<dbReference type="Gene3D" id="4.10.640.10">
    <property type="entry name" value="Ribosomal protein S18"/>
    <property type="match status" value="1"/>
</dbReference>
<dbReference type="HAMAP" id="MF_00270">
    <property type="entry name" value="Ribosomal_bS18"/>
    <property type="match status" value="1"/>
</dbReference>
<dbReference type="InterPro" id="IPR001648">
    <property type="entry name" value="Ribosomal_bS18"/>
</dbReference>
<dbReference type="InterPro" id="IPR018275">
    <property type="entry name" value="Ribosomal_bS18_CS"/>
</dbReference>
<dbReference type="InterPro" id="IPR036870">
    <property type="entry name" value="Ribosomal_bS18_sf"/>
</dbReference>
<dbReference type="NCBIfam" id="TIGR00165">
    <property type="entry name" value="S18"/>
    <property type="match status" value="1"/>
</dbReference>
<dbReference type="PANTHER" id="PTHR13479">
    <property type="entry name" value="30S RIBOSOMAL PROTEIN S18"/>
    <property type="match status" value="1"/>
</dbReference>
<dbReference type="PANTHER" id="PTHR13479:SF40">
    <property type="entry name" value="SMALL RIBOSOMAL SUBUNIT PROTEIN BS18M"/>
    <property type="match status" value="1"/>
</dbReference>
<dbReference type="Pfam" id="PF01084">
    <property type="entry name" value="Ribosomal_S18"/>
    <property type="match status" value="1"/>
</dbReference>
<dbReference type="PRINTS" id="PR00974">
    <property type="entry name" value="RIBOSOMALS18"/>
</dbReference>
<dbReference type="SUPFAM" id="SSF46911">
    <property type="entry name" value="Ribosomal protein S18"/>
    <property type="match status" value="1"/>
</dbReference>
<dbReference type="PROSITE" id="PS00057">
    <property type="entry name" value="RIBOSOMAL_S18"/>
    <property type="match status" value="1"/>
</dbReference>
<evidence type="ECO:0000255" key="1">
    <source>
        <dbReference type="HAMAP-Rule" id="MF_00270"/>
    </source>
</evidence>
<evidence type="ECO:0000305" key="2"/>
<keyword id="KW-0687">Ribonucleoprotein</keyword>
<keyword id="KW-0689">Ribosomal protein</keyword>
<keyword id="KW-0694">RNA-binding</keyword>
<keyword id="KW-0699">rRNA-binding</keyword>
<feature type="chain" id="PRO_1000114457" description="Small ribosomal subunit protein bS18">
    <location>
        <begin position="1"/>
        <end position="79"/>
    </location>
</feature>
<reference key="1">
    <citation type="journal article" date="2010" name="Genome Biol.">
        <title>Structure and dynamics of the pan-genome of Streptococcus pneumoniae and closely related species.</title>
        <authorList>
            <person name="Donati C."/>
            <person name="Hiller N.L."/>
            <person name="Tettelin H."/>
            <person name="Muzzi A."/>
            <person name="Croucher N.J."/>
            <person name="Angiuoli S.V."/>
            <person name="Oggioni M."/>
            <person name="Dunning Hotopp J.C."/>
            <person name="Hu F.Z."/>
            <person name="Riley D.R."/>
            <person name="Covacci A."/>
            <person name="Mitchell T.J."/>
            <person name="Bentley S.D."/>
            <person name="Kilian M."/>
            <person name="Ehrlich G.D."/>
            <person name="Rappuoli R."/>
            <person name="Moxon E.R."/>
            <person name="Masignani V."/>
        </authorList>
    </citation>
    <scope>NUCLEOTIDE SEQUENCE [LARGE SCALE GENOMIC DNA]</scope>
    <source>
        <strain>Hungary19A-6</strain>
    </source>
</reference>
<gene>
    <name evidence="1" type="primary">rpsR</name>
    <name type="ordered locus">SPH_1653</name>
</gene>
<comment type="function">
    <text evidence="1">Binds as a heterodimer with protein bS6 to the central domain of the 16S rRNA, where it helps stabilize the platform of the 30S subunit.</text>
</comment>
<comment type="subunit">
    <text evidence="1">Part of the 30S ribosomal subunit. Forms a tight heterodimer with protein bS6.</text>
</comment>
<comment type="similarity">
    <text evidence="1">Belongs to the bacterial ribosomal protein bS18 family.</text>
</comment>
<sequence length="79" mass="9204">MAQQRRGGFKRRKKVDYIAANKIEYVDYKDTELLSRFVSERGKILPRRVTGTSAKNQRKVTTAIKRARVMALMPFVNED</sequence>